<proteinExistence type="inferred from homology"/>
<reference key="1">
    <citation type="journal article" date="2010" name="J. Bacteriol.">
        <title>Complete genome sequence of the aerobic facultative methanotroph Methylocella silvestris BL2.</title>
        <authorList>
            <person name="Chen Y."/>
            <person name="Crombie A."/>
            <person name="Rahman M.T."/>
            <person name="Dedysh S.N."/>
            <person name="Liesack W."/>
            <person name="Stott M.B."/>
            <person name="Alam M."/>
            <person name="Theisen A.R."/>
            <person name="Murrell J.C."/>
            <person name="Dunfield P.F."/>
        </authorList>
    </citation>
    <scope>NUCLEOTIDE SEQUENCE [LARGE SCALE GENOMIC DNA]</scope>
    <source>
        <strain>DSM 15510 / CIP 108128 / LMG 27833 / NCIMB 13906 / BL2</strain>
    </source>
</reference>
<name>GLGA_METSB</name>
<evidence type="ECO:0000255" key="1">
    <source>
        <dbReference type="HAMAP-Rule" id="MF_00484"/>
    </source>
</evidence>
<gene>
    <name evidence="1" type="primary">glgA</name>
    <name type="ordered locus">Msil_0213</name>
</gene>
<keyword id="KW-0320">Glycogen biosynthesis</keyword>
<keyword id="KW-0328">Glycosyltransferase</keyword>
<keyword id="KW-1185">Reference proteome</keyword>
<keyword id="KW-0808">Transferase</keyword>
<dbReference type="EC" id="2.4.1.21" evidence="1"/>
<dbReference type="EMBL" id="CP001280">
    <property type="protein sequence ID" value="ACK49194.1"/>
    <property type="molecule type" value="Genomic_DNA"/>
</dbReference>
<dbReference type="RefSeq" id="WP_012589264.1">
    <property type="nucleotide sequence ID" value="NC_011666.1"/>
</dbReference>
<dbReference type="SMR" id="B8EN59"/>
<dbReference type="STRING" id="395965.Msil_0213"/>
<dbReference type="CAZy" id="GT5">
    <property type="family name" value="Glycosyltransferase Family 5"/>
</dbReference>
<dbReference type="KEGG" id="msl:Msil_0213"/>
<dbReference type="eggNOG" id="COG0297">
    <property type="taxonomic scope" value="Bacteria"/>
</dbReference>
<dbReference type="HOGENOM" id="CLU_009583_18_4_5"/>
<dbReference type="OrthoDB" id="9808590at2"/>
<dbReference type="UniPathway" id="UPA00164"/>
<dbReference type="Proteomes" id="UP000002257">
    <property type="component" value="Chromosome"/>
</dbReference>
<dbReference type="GO" id="GO:0005829">
    <property type="term" value="C:cytosol"/>
    <property type="evidence" value="ECO:0007669"/>
    <property type="project" value="TreeGrafter"/>
</dbReference>
<dbReference type="GO" id="GO:0009011">
    <property type="term" value="F:alpha-1,4-glucan glucosyltransferase (ADP-glucose donor) activity"/>
    <property type="evidence" value="ECO:0007669"/>
    <property type="project" value="UniProtKB-UniRule"/>
</dbReference>
<dbReference type="GO" id="GO:0004373">
    <property type="term" value="F:alpha-1,4-glucan glucosyltransferase (UDP-glucose donor) activity"/>
    <property type="evidence" value="ECO:0007669"/>
    <property type="project" value="InterPro"/>
</dbReference>
<dbReference type="GO" id="GO:0005978">
    <property type="term" value="P:glycogen biosynthetic process"/>
    <property type="evidence" value="ECO:0007669"/>
    <property type="project" value="UniProtKB-UniRule"/>
</dbReference>
<dbReference type="CDD" id="cd03791">
    <property type="entry name" value="GT5_Glycogen_synthase_DULL1-like"/>
    <property type="match status" value="1"/>
</dbReference>
<dbReference type="Gene3D" id="3.40.50.2000">
    <property type="entry name" value="Glycogen Phosphorylase B"/>
    <property type="match status" value="2"/>
</dbReference>
<dbReference type="HAMAP" id="MF_00484">
    <property type="entry name" value="Glycogen_synth"/>
    <property type="match status" value="1"/>
</dbReference>
<dbReference type="InterPro" id="IPR001296">
    <property type="entry name" value="Glyco_trans_1"/>
</dbReference>
<dbReference type="InterPro" id="IPR011835">
    <property type="entry name" value="GS/SS"/>
</dbReference>
<dbReference type="InterPro" id="IPR013534">
    <property type="entry name" value="Starch_synth_cat_dom"/>
</dbReference>
<dbReference type="NCBIfam" id="TIGR02095">
    <property type="entry name" value="glgA"/>
    <property type="match status" value="1"/>
</dbReference>
<dbReference type="NCBIfam" id="NF001899">
    <property type="entry name" value="PRK00654.1-2"/>
    <property type="match status" value="1"/>
</dbReference>
<dbReference type="NCBIfam" id="NF010699">
    <property type="entry name" value="PRK14099.1"/>
    <property type="match status" value="1"/>
</dbReference>
<dbReference type="PANTHER" id="PTHR45825:SF11">
    <property type="entry name" value="ALPHA AMYLASE DOMAIN-CONTAINING PROTEIN"/>
    <property type="match status" value="1"/>
</dbReference>
<dbReference type="PANTHER" id="PTHR45825">
    <property type="entry name" value="GRANULE-BOUND STARCH SYNTHASE 1, CHLOROPLASTIC/AMYLOPLASTIC"/>
    <property type="match status" value="1"/>
</dbReference>
<dbReference type="Pfam" id="PF08323">
    <property type="entry name" value="Glyco_transf_5"/>
    <property type="match status" value="1"/>
</dbReference>
<dbReference type="Pfam" id="PF00534">
    <property type="entry name" value="Glycos_transf_1"/>
    <property type="match status" value="1"/>
</dbReference>
<dbReference type="SUPFAM" id="SSF53756">
    <property type="entry name" value="UDP-Glycosyltransferase/glycogen phosphorylase"/>
    <property type="match status" value="1"/>
</dbReference>
<feature type="chain" id="PRO_1000135653" description="Glycogen synthase">
    <location>
        <begin position="1"/>
        <end position="483"/>
    </location>
</feature>
<feature type="binding site" evidence="1">
    <location>
        <position position="18"/>
    </location>
    <ligand>
        <name>ADP-alpha-D-glucose</name>
        <dbReference type="ChEBI" id="CHEBI:57498"/>
    </ligand>
</feature>
<organism>
    <name type="scientific">Methylocella silvestris (strain DSM 15510 / CIP 108128 / LMG 27833 / NCIMB 13906 / BL2)</name>
    <dbReference type="NCBI Taxonomy" id="395965"/>
    <lineage>
        <taxon>Bacteria</taxon>
        <taxon>Pseudomonadati</taxon>
        <taxon>Pseudomonadota</taxon>
        <taxon>Alphaproteobacteria</taxon>
        <taxon>Hyphomicrobiales</taxon>
        <taxon>Beijerinckiaceae</taxon>
        <taxon>Methylocella</taxon>
    </lineage>
</organism>
<sequence length="483" mass="51456">MSEISVLAIVSEIFPLIKTGGLADVAGALPAALAGEGIEVATLVPGYPAVMAQIEYAETVIDARPLYGAPARVLRGSAAGLDLFVLDAPHLYDRPGNPYLLPDGRDFPDNPFRFAALCQTGSALGFGAAPGFLPDIVHAHDWQAGLAAAYLHYDGRERPGTVATIHNLAFQGKYPAELLGALGLPPQAFSLEGVEYYGTIGFLKAALALSDRITTVSPTYAAEIRTPEHGMGLDGLLRTRAERLIGILNGIDDEVWDPSSDPLITEPFDVETLARRPANKAALQDKFGLDPDPGALLLGVVSRLSWQKGLDLLLANLDLLERLGVQLAVLGSGEPELVRQLLEAAEARPGRVGAVIGYDEAIAHRIQAGADAIVIPSRFEPCGLTQLCALRYGALPIVARVGGLADTIIDANEMALASGIGTGLQFSPPTADMLGATLERAARLWAEPEIWDELIENGMLTDVSWRRPAALYAKLFRDLVRER</sequence>
<comment type="function">
    <text evidence="1">Synthesizes alpha-1,4-glucan chains using ADP-glucose.</text>
</comment>
<comment type="catalytic activity">
    <reaction evidence="1">
        <text>[(1-&gt;4)-alpha-D-glucosyl](n) + ADP-alpha-D-glucose = [(1-&gt;4)-alpha-D-glucosyl](n+1) + ADP + H(+)</text>
        <dbReference type="Rhea" id="RHEA:18189"/>
        <dbReference type="Rhea" id="RHEA-COMP:9584"/>
        <dbReference type="Rhea" id="RHEA-COMP:9587"/>
        <dbReference type="ChEBI" id="CHEBI:15378"/>
        <dbReference type="ChEBI" id="CHEBI:15444"/>
        <dbReference type="ChEBI" id="CHEBI:57498"/>
        <dbReference type="ChEBI" id="CHEBI:456216"/>
        <dbReference type="EC" id="2.4.1.21"/>
    </reaction>
</comment>
<comment type="pathway">
    <text evidence="1">Glycan biosynthesis; glycogen biosynthesis.</text>
</comment>
<comment type="similarity">
    <text evidence="1">Belongs to the glycosyltransferase 1 family. Bacterial/plant glycogen synthase subfamily.</text>
</comment>
<accession>B8EN59</accession>
<protein>
    <recommendedName>
        <fullName evidence="1">Glycogen synthase</fullName>
        <ecNumber evidence="1">2.4.1.21</ecNumber>
    </recommendedName>
    <alternativeName>
        <fullName evidence="1">Starch [bacterial glycogen] synthase</fullName>
    </alternativeName>
</protein>